<proteinExistence type="inferred from homology"/>
<sequence>MESAASHIIVRTPVIDSIGELYETRGLGKKSVVLFDENTRKLYGDKIIASMQRQGFRTVELVVPARETSKSVSTAWKLYGQMIETDVDRSWNLLCVGGGVVGDLGGYIAASYYRGIPVVQLPTTLLAMTDSSIGGKVAINHPLGKNLIGYFHMPALVLIDPAFLRTLPAREIFGGMAEVVKYGFIADRKFFDMLAEHWDEVTRLEEPWISDAVSRSAFTKADVVEKDFRETSGLRATLNFGHTFAHGLEKMAEYRNLRHGEAVTIGMACALYLSYRLGFLAEAELNEGLALIARFRFPRNLVNKRFISLDLEELFDAMHSDKKKIDKQLRFVLLDRIGHAFLHDREVPKADVLHAIDDAQRWFSEKR</sequence>
<feature type="chain" id="PRO_1000117479" description="3-dehydroquinate synthase">
    <location>
        <begin position="1"/>
        <end position="367"/>
    </location>
</feature>
<feature type="binding site" evidence="1">
    <location>
        <begin position="99"/>
        <end position="103"/>
    </location>
    <ligand>
        <name>NAD(+)</name>
        <dbReference type="ChEBI" id="CHEBI:57540"/>
    </ligand>
</feature>
<feature type="binding site" evidence="1">
    <location>
        <begin position="123"/>
        <end position="124"/>
    </location>
    <ligand>
        <name>NAD(+)</name>
        <dbReference type="ChEBI" id="CHEBI:57540"/>
    </ligand>
</feature>
<feature type="binding site" evidence="1">
    <location>
        <position position="136"/>
    </location>
    <ligand>
        <name>NAD(+)</name>
        <dbReference type="ChEBI" id="CHEBI:57540"/>
    </ligand>
</feature>
<feature type="binding site" evidence="1">
    <location>
        <position position="145"/>
    </location>
    <ligand>
        <name>NAD(+)</name>
        <dbReference type="ChEBI" id="CHEBI:57540"/>
    </ligand>
</feature>
<feature type="binding site" evidence="1">
    <location>
        <begin position="163"/>
        <end position="166"/>
    </location>
    <ligand>
        <name>NAD(+)</name>
        <dbReference type="ChEBI" id="CHEBI:57540"/>
    </ligand>
</feature>
<feature type="binding site" evidence="1">
    <location>
        <position position="178"/>
    </location>
    <ligand>
        <name>Zn(2+)</name>
        <dbReference type="ChEBI" id="CHEBI:29105"/>
    </ligand>
</feature>
<feature type="binding site" evidence="1">
    <location>
        <position position="242"/>
    </location>
    <ligand>
        <name>Zn(2+)</name>
        <dbReference type="ChEBI" id="CHEBI:29105"/>
    </ligand>
</feature>
<feature type="binding site" evidence="1">
    <location>
        <position position="259"/>
    </location>
    <ligand>
        <name>Zn(2+)</name>
        <dbReference type="ChEBI" id="CHEBI:29105"/>
    </ligand>
</feature>
<evidence type="ECO:0000255" key="1">
    <source>
        <dbReference type="HAMAP-Rule" id="MF_00110"/>
    </source>
</evidence>
<dbReference type="EC" id="4.2.3.4" evidence="1"/>
<dbReference type="EMBL" id="CP001099">
    <property type="protein sequence ID" value="ACF11175.1"/>
    <property type="molecule type" value="Genomic_DNA"/>
</dbReference>
<dbReference type="RefSeq" id="WP_012502008.1">
    <property type="nucleotide sequence ID" value="NC_011027.1"/>
</dbReference>
<dbReference type="SMR" id="B3QMM2"/>
<dbReference type="STRING" id="517417.Cpar_0758"/>
<dbReference type="KEGG" id="cpc:Cpar_0758"/>
<dbReference type="eggNOG" id="COG0337">
    <property type="taxonomic scope" value="Bacteria"/>
</dbReference>
<dbReference type="HOGENOM" id="CLU_001201_0_2_10"/>
<dbReference type="OrthoDB" id="9806583at2"/>
<dbReference type="UniPathway" id="UPA00053">
    <property type="reaction ID" value="UER00085"/>
</dbReference>
<dbReference type="Proteomes" id="UP000008811">
    <property type="component" value="Chromosome"/>
</dbReference>
<dbReference type="GO" id="GO:0005737">
    <property type="term" value="C:cytoplasm"/>
    <property type="evidence" value="ECO:0007669"/>
    <property type="project" value="UniProtKB-SubCell"/>
</dbReference>
<dbReference type="GO" id="GO:0003856">
    <property type="term" value="F:3-dehydroquinate synthase activity"/>
    <property type="evidence" value="ECO:0007669"/>
    <property type="project" value="UniProtKB-UniRule"/>
</dbReference>
<dbReference type="GO" id="GO:0046872">
    <property type="term" value="F:metal ion binding"/>
    <property type="evidence" value="ECO:0007669"/>
    <property type="project" value="UniProtKB-KW"/>
</dbReference>
<dbReference type="GO" id="GO:0000166">
    <property type="term" value="F:nucleotide binding"/>
    <property type="evidence" value="ECO:0007669"/>
    <property type="project" value="UniProtKB-KW"/>
</dbReference>
<dbReference type="GO" id="GO:0008652">
    <property type="term" value="P:amino acid biosynthetic process"/>
    <property type="evidence" value="ECO:0007669"/>
    <property type="project" value="UniProtKB-KW"/>
</dbReference>
<dbReference type="GO" id="GO:0009073">
    <property type="term" value="P:aromatic amino acid family biosynthetic process"/>
    <property type="evidence" value="ECO:0007669"/>
    <property type="project" value="UniProtKB-KW"/>
</dbReference>
<dbReference type="GO" id="GO:0009423">
    <property type="term" value="P:chorismate biosynthetic process"/>
    <property type="evidence" value="ECO:0007669"/>
    <property type="project" value="UniProtKB-UniRule"/>
</dbReference>
<dbReference type="CDD" id="cd08195">
    <property type="entry name" value="DHQS"/>
    <property type="match status" value="1"/>
</dbReference>
<dbReference type="FunFam" id="3.40.50.1970:FF:000007">
    <property type="entry name" value="Pentafunctional AROM polypeptide"/>
    <property type="match status" value="1"/>
</dbReference>
<dbReference type="Gene3D" id="3.40.50.1970">
    <property type="match status" value="1"/>
</dbReference>
<dbReference type="Gene3D" id="1.20.1090.10">
    <property type="entry name" value="Dehydroquinate synthase-like - alpha domain"/>
    <property type="match status" value="1"/>
</dbReference>
<dbReference type="HAMAP" id="MF_00110">
    <property type="entry name" value="DHQ_synthase"/>
    <property type="match status" value="1"/>
</dbReference>
<dbReference type="InterPro" id="IPR050071">
    <property type="entry name" value="Dehydroquinate_synthase"/>
</dbReference>
<dbReference type="InterPro" id="IPR016037">
    <property type="entry name" value="DHQ_synth_AroB"/>
</dbReference>
<dbReference type="InterPro" id="IPR030963">
    <property type="entry name" value="DHQ_synth_fam"/>
</dbReference>
<dbReference type="InterPro" id="IPR030960">
    <property type="entry name" value="DHQS/DOIS_N"/>
</dbReference>
<dbReference type="InterPro" id="IPR056179">
    <property type="entry name" value="DHQS_C"/>
</dbReference>
<dbReference type="NCBIfam" id="TIGR01357">
    <property type="entry name" value="aroB"/>
    <property type="match status" value="1"/>
</dbReference>
<dbReference type="PANTHER" id="PTHR43622">
    <property type="entry name" value="3-DEHYDROQUINATE SYNTHASE"/>
    <property type="match status" value="1"/>
</dbReference>
<dbReference type="PANTHER" id="PTHR43622:SF1">
    <property type="entry name" value="3-DEHYDROQUINATE SYNTHASE"/>
    <property type="match status" value="1"/>
</dbReference>
<dbReference type="Pfam" id="PF01761">
    <property type="entry name" value="DHQ_synthase"/>
    <property type="match status" value="1"/>
</dbReference>
<dbReference type="Pfam" id="PF24621">
    <property type="entry name" value="DHQS_C"/>
    <property type="match status" value="1"/>
</dbReference>
<dbReference type="PIRSF" id="PIRSF001455">
    <property type="entry name" value="DHQ_synth"/>
    <property type="match status" value="1"/>
</dbReference>
<dbReference type="SUPFAM" id="SSF56796">
    <property type="entry name" value="Dehydroquinate synthase-like"/>
    <property type="match status" value="1"/>
</dbReference>
<protein>
    <recommendedName>
        <fullName evidence="1">3-dehydroquinate synthase</fullName>
        <shortName evidence="1">DHQS</shortName>
        <ecNumber evidence="1">4.2.3.4</ecNumber>
    </recommendedName>
</protein>
<comment type="function">
    <text evidence="1">Catalyzes the conversion of 3-deoxy-D-arabino-heptulosonate 7-phosphate (DAHP) to dehydroquinate (DHQ).</text>
</comment>
<comment type="catalytic activity">
    <reaction evidence="1">
        <text>7-phospho-2-dehydro-3-deoxy-D-arabino-heptonate = 3-dehydroquinate + phosphate</text>
        <dbReference type="Rhea" id="RHEA:21968"/>
        <dbReference type="ChEBI" id="CHEBI:32364"/>
        <dbReference type="ChEBI" id="CHEBI:43474"/>
        <dbReference type="ChEBI" id="CHEBI:58394"/>
        <dbReference type="EC" id="4.2.3.4"/>
    </reaction>
</comment>
<comment type="cofactor">
    <cofactor evidence="1">
        <name>Co(2+)</name>
        <dbReference type="ChEBI" id="CHEBI:48828"/>
    </cofactor>
    <cofactor evidence="1">
        <name>Zn(2+)</name>
        <dbReference type="ChEBI" id="CHEBI:29105"/>
    </cofactor>
    <text evidence="1">Binds 1 divalent metal cation per subunit. Can use either Co(2+) or Zn(2+).</text>
</comment>
<comment type="cofactor">
    <cofactor evidence="1">
        <name>NAD(+)</name>
        <dbReference type="ChEBI" id="CHEBI:57540"/>
    </cofactor>
</comment>
<comment type="pathway">
    <text evidence="1">Metabolic intermediate biosynthesis; chorismate biosynthesis; chorismate from D-erythrose 4-phosphate and phosphoenolpyruvate: step 2/7.</text>
</comment>
<comment type="subcellular location">
    <subcellularLocation>
        <location evidence="1">Cytoplasm</location>
    </subcellularLocation>
</comment>
<comment type="similarity">
    <text evidence="1">Belongs to the sugar phosphate cyclases superfamily. Dehydroquinate synthase family.</text>
</comment>
<gene>
    <name evidence="1" type="primary">aroB</name>
    <name type="ordered locus">Cpar_0758</name>
</gene>
<keyword id="KW-0028">Amino-acid biosynthesis</keyword>
<keyword id="KW-0057">Aromatic amino acid biosynthesis</keyword>
<keyword id="KW-0170">Cobalt</keyword>
<keyword id="KW-0963">Cytoplasm</keyword>
<keyword id="KW-0456">Lyase</keyword>
<keyword id="KW-0479">Metal-binding</keyword>
<keyword id="KW-0520">NAD</keyword>
<keyword id="KW-0547">Nucleotide-binding</keyword>
<keyword id="KW-0862">Zinc</keyword>
<name>AROB_CHLP8</name>
<reference key="1">
    <citation type="submission" date="2008-06" db="EMBL/GenBank/DDBJ databases">
        <title>Complete sequence of Chlorobaculum parvum NCIB 8327.</title>
        <authorList>
            <consortium name="US DOE Joint Genome Institute"/>
            <person name="Lucas S."/>
            <person name="Copeland A."/>
            <person name="Lapidus A."/>
            <person name="Glavina del Rio T."/>
            <person name="Dalin E."/>
            <person name="Tice H."/>
            <person name="Bruce D."/>
            <person name="Goodwin L."/>
            <person name="Pitluck S."/>
            <person name="Schmutz J."/>
            <person name="Larimer F."/>
            <person name="Land M."/>
            <person name="Hauser L."/>
            <person name="Kyrpides N."/>
            <person name="Mikhailova N."/>
            <person name="Zhao F."/>
            <person name="Li T."/>
            <person name="Liu Z."/>
            <person name="Overmann J."/>
            <person name="Bryant D.A."/>
            <person name="Richardson P."/>
        </authorList>
    </citation>
    <scope>NUCLEOTIDE SEQUENCE [LARGE SCALE GENOMIC DNA]</scope>
    <source>
        <strain>DSM 263 / NCIMB 8327</strain>
    </source>
</reference>
<organism>
    <name type="scientific">Chlorobaculum parvum (strain DSM 263 / NCIMB 8327)</name>
    <name type="common">Chlorobium vibrioforme subsp. thiosulfatophilum</name>
    <dbReference type="NCBI Taxonomy" id="517417"/>
    <lineage>
        <taxon>Bacteria</taxon>
        <taxon>Pseudomonadati</taxon>
        <taxon>Chlorobiota</taxon>
        <taxon>Chlorobiia</taxon>
        <taxon>Chlorobiales</taxon>
        <taxon>Chlorobiaceae</taxon>
        <taxon>Chlorobaculum</taxon>
    </lineage>
</organism>
<accession>B3QMM2</accession>